<protein>
    <recommendedName>
        <fullName>Transcription factor BYE1</fullName>
    </recommendedName>
</protein>
<keyword id="KW-0479">Metal-binding</keyword>
<keyword id="KW-0539">Nucleus</keyword>
<keyword id="KW-1185">Reference proteome</keyword>
<keyword id="KW-0678">Repressor</keyword>
<keyword id="KW-0804">Transcription</keyword>
<keyword id="KW-0805">Transcription regulation</keyword>
<keyword id="KW-0862">Zinc</keyword>
<keyword id="KW-0863">Zinc-finger</keyword>
<dbReference type="EMBL" id="CR380959">
    <property type="protein sequence ID" value="CAG62772.1"/>
    <property type="molecule type" value="Genomic_DNA"/>
</dbReference>
<dbReference type="RefSeq" id="XP_449794.1">
    <property type="nucleotide sequence ID" value="XM_449794.1"/>
</dbReference>
<dbReference type="SMR" id="Q6FJ00"/>
<dbReference type="FunCoup" id="Q6FJ00">
    <property type="interactions" value="25"/>
</dbReference>
<dbReference type="STRING" id="284593.Q6FJ00"/>
<dbReference type="EnsemblFungi" id="CAGL0M10285g-T">
    <property type="protein sequence ID" value="CAGL0M10285g-T-p1"/>
    <property type="gene ID" value="CAGL0M10285g"/>
</dbReference>
<dbReference type="KEGG" id="cgr:2891358"/>
<dbReference type="CGD" id="CAL0136525">
    <property type="gene designation" value="CAGL0M10285g"/>
</dbReference>
<dbReference type="VEuPathDB" id="FungiDB:CAGL0M10285g"/>
<dbReference type="eggNOG" id="KOG1634">
    <property type="taxonomic scope" value="Eukaryota"/>
</dbReference>
<dbReference type="HOGENOM" id="CLU_495285_0_0_1"/>
<dbReference type="InParanoid" id="Q6FJ00"/>
<dbReference type="OMA" id="RTHKGDI"/>
<dbReference type="Proteomes" id="UP000002428">
    <property type="component" value="Chromosome M"/>
</dbReference>
<dbReference type="GO" id="GO:0005634">
    <property type="term" value="C:nucleus"/>
    <property type="evidence" value="ECO:0007669"/>
    <property type="project" value="UniProtKB-SubCell"/>
</dbReference>
<dbReference type="GO" id="GO:0000977">
    <property type="term" value="F:RNA polymerase II transcription regulatory region sequence-specific DNA binding"/>
    <property type="evidence" value="ECO:0007669"/>
    <property type="project" value="TreeGrafter"/>
</dbReference>
<dbReference type="GO" id="GO:0008270">
    <property type="term" value="F:zinc ion binding"/>
    <property type="evidence" value="ECO:0007669"/>
    <property type="project" value="UniProtKB-KW"/>
</dbReference>
<dbReference type="GO" id="GO:0006351">
    <property type="term" value="P:DNA-templated transcription"/>
    <property type="evidence" value="ECO:0007669"/>
    <property type="project" value="InterPro"/>
</dbReference>
<dbReference type="CDD" id="cd21542">
    <property type="entry name" value="SPOC_Bye1p-like"/>
    <property type="match status" value="1"/>
</dbReference>
<dbReference type="Gene3D" id="1.10.472.30">
    <property type="entry name" value="Transcription elongation factor S-II, central domain"/>
    <property type="match status" value="1"/>
</dbReference>
<dbReference type="Gene3D" id="3.30.40.10">
    <property type="entry name" value="Zinc/RING finger domain, C3HC4 (zinc finger)"/>
    <property type="match status" value="1"/>
</dbReference>
<dbReference type="InterPro" id="IPR003618">
    <property type="entry name" value="TFIIS_cen_dom"/>
</dbReference>
<dbReference type="InterPro" id="IPR036575">
    <property type="entry name" value="TFIIS_cen_dom_sf"/>
</dbReference>
<dbReference type="InterPro" id="IPR019786">
    <property type="entry name" value="Zinc_finger_PHD-type_CS"/>
</dbReference>
<dbReference type="InterPro" id="IPR011011">
    <property type="entry name" value="Znf_FYVE_PHD"/>
</dbReference>
<dbReference type="InterPro" id="IPR001965">
    <property type="entry name" value="Znf_PHD"/>
</dbReference>
<dbReference type="InterPro" id="IPR019787">
    <property type="entry name" value="Znf_PHD-finger"/>
</dbReference>
<dbReference type="InterPro" id="IPR013083">
    <property type="entry name" value="Znf_RING/FYVE/PHD"/>
</dbReference>
<dbReference type="PANTHER" id="PTHR11477:SF0">
    <property type="entry name" value="IP08861P-RELATED"/>
    <property type="match status" value="1"/>
</dbReference>
<dbReference type="PANTHER" id="PTHR11477">
    <property type="entry name" value="TRANSCRIPTION FACTOR S-II ZINC FINGER DOMAIN-CONTAINING PROTEIN"/>
    <property type="match status" value="1"/>
</dbReference>
<dbReference type="Pfam" id="PF07500">
    <property type="entry name" value="TFIIS_M"/>
    <property type="match status" value="1"/>
</dbReference>
<dbReference type="SMART" id="SM00249">
    <property type="entry name" value="PHD"/>
    <property type="match status" value="1"/>
</dbReference>
<dbReference type="SMART" id="SM00510">
    <property type="entry name" value="TFS2M"/>
    <property type="match status" value="1"/>
</dbReference>
<dbReference type="SUPFAM" id="SSF46942">
    <property type="entry name" value="Elongation factor TFIIS domain 2"/>
    <property type="match status" value="1"/>
</dbReference>
<dbReference type="SUPFAM" id="SSF57903">
    <property type="entry name" value="FYVE/PHD zinc finger"/>
    <property type="match status" value="1"/>
</dbReference>
<dbReference type="PROSITE" id="PS51321">
    <property type="entry name" value="TFIIS_CENTRAL"/>
    <property type="match status" value="1"/>
</dbReference>
<dbReference type="PROSITE" id="PS01359">
    <property type="entry name" value="ZF_PHD_1"/>
    <property type="match status" value="1"/>
</dbReference>
<dbReference type="PROSITE" id="PS50016">
    <property type="entry name" value="ZF_PHD_2"/>
    <property type="match status" value="1"/>
</dbReference>
<name>BYE1_CANGA</name>
<evidence type="ECO:0000250" key="1"/>
<evidence type="ECO:0000255" key="2">
    <source>
        <dbReference type="PROSITE-ProRule" id="PRU00146"/>
    </source>
</evidence>
<evidence type="ECO:0000255" key="3">
    <source>
        <dbReference type="PROSITE-ProRule" id="PRU00651"/>
    </source>
</evidence>
<evidence type="ECO:0000256" key="4">
    <source>
        <dbReference type="SAM" id="MobiDB-lite"/>
    </source>
</evidence>
<evidence type="ECO:0000305" key="5"/>
<gene>
    <name type="primary">BYE1</name>
    <name type="ordered locus">CAGL0M10285g</name>
</gene>
<comment type="function">
    <text evidence="1">Negative regulator of transcription elongation.</text>
</comment>
<comment type="subcellular location">
    <subcellularLocation>
        <location evidence="3">Nucleus</location>
    </subcellularLocation>
</comment>
<comment type="similarity">
    <text evidence="5">Belongs to the BYE1 family.</text>
</comment>
<organism>
    <name type="scientific">Candida glabrata (strain ATCC 2001 / BCRC 20586 / JCM 3761 / NBRC 0622 / NRRL Y-65 / CBS 138)</name>
    <name type="common">Yeast</name>
    <name type="synonym">Nakaseomyces glabratus</name>
    <dbReference type="NCBI Taxonomy" id="284593"/>
    <lineage>
        <taxon>Eukaryota</taxon>
        <taxon>Fungi</taxon>
        <taxon>Dikarya</taxon>
        <taxon>Ascomycota</taxon>
        <taxon>Saccharomycotina</taxon>
        <taxon>Saccharomycetes</taxon>
        <taxon>Saccharomycetales</taxon>
        <taxon>Saccharomycetaceae</taxon>
        <taxon>Nakaseomyces</taxon>
    </lineage>
</organism>
<sequence>MESLRKSSRSTKGKNTYLEVLRRQEEEEYEQRVNRPKKEKVQEIVHCSPCGTTDANYVEDEDPYGEMIQCDQCDTWQHINCMLQVKDIKVPKELENSDDVDSLSKLLVNSEDKYYCDRCIYKSQLREERRAYKELNKSEMIGDNDILDEPKEHPDEYVDDQDEDQDFILSKDTANIAEVDDDEFVENDDNRVKKDKRKRKPSNSAITTTKTVPKKKARVITDDQTETETIPSEDSYAKVRTNARKMLVTLFKNYIIPDTLKNNVFEIVKGHDEQSISDEFAEEMESKLFSHCRSISNYKTLISVYTEKVRVLFSNLKDPKNLSLKEAVINRQLDLEQLVSMSATDLANPDLQSMKKKIDSQKIDSLVIPNQPLDKLKQDNSEDDHNSFEFTNPTFTKTFNPKDIHESNSNNRPYTTDSPTNSYTDEPDSMKSDSNNGVDTNDQNILNVKFKLDYNEVDLNVVGTFKFLGSTLLDENQEHKIYQAVVGDGKLIYEGRLHTKIATEYISEIKTTRAVLAYQLLPSASHREKYEQLVEFMDDLDRVLGMKPRKPYVKNMYILSSLLGKLPDILQILTTDESIAKKRIDLSRINDNDKTLYLVVVVKPEIV</sequence>
<reference key="1">
    <citation type="journal article" date="2004" name="Nature">
        <title>Genome evolution in yeasts.</title>
        <authorList>
            <person name="Dujon B."/>
            <person name="Sherman D."/>
            <person name="Fischer G."/>
            <person name="Durrens P."/>
            <person name="Casaregola S."/>
            <person name="Lafontaine I."/>
            <person name="de Montigny J."/>
            <person name="Marck C."/>
            <person name="Neuveglise C."/>
            <person name="Talla E."/>
            <person name="Goffard N."/>
            <person name="Frangeul L."/>
            <person name="Aigle M."/>
            <person name="Anthouard V."/>
            <person name="Babour A."/>
            <person name="Barbe V."/>
            <person name="Barnay S."/>
            <person name="Blanchin S."/>
            <person name="Beckerich J.-M."/>
            <person name="Beyne E."/>
            <person name="Bleykasten C."/>
            <person name="Boisrame A."/>
            <person name="Boyer J."/>
            <person name="Cattolico L."/>
            <person name="Confanioleri F."/>
            <person name="de Daruvar A."/>
            <person name="Despons L."/>
            <person name="Fabre E."/>
            <person name="Fairhead C."/>
            <person name="Ferry-Dumazet H."/>
            <person name="Groppi A."/>
            <person name="Hantraye F."/>
            <person name="Hennequin C."/>
            <person name="Jauniaux N."/>
            <person name="Joyet P."/>
            <person name="Kachouri R."/>
            <person name="Kerrest A."/>
            <person name="Koszul R."/>
            <person name="Lemaire M."/>
            <person name="Lesur I."/>
            <person name="Ma L."/>
            <person name="Muller H."/>
            <person name="Nicaud J.-M."/>
            <person name="Nikolski M."/>
            <person name="Oztas S."/>
            <person name="Ozier-Kalogeropoulos O."/>
            <person name="Pellenz S."/>
            <person name="Potier S."/>
            <person name="Richard G.-F."/>
            <person name="Straub M.-L."/>
            <person name="Suleau A."/>
            <person name="Swennen D."/>
            <person name="Tekaia F."/>
            <person name="Wesolowski-Louvel M."/>
            <person name="Westhof E."/>
            <person name="Wirth B."/>
            <person name="Zeniou-Meyer M."/>
            <person name="Zivanovic Y."/>
            <person name="Bolotin-Fukuhara M."/>
            <person name="Thierry A."/>
            <person name="Bouchier C."/>
            <person name="Caudron B."/>
            <person name="Scarpelli C."/>
            <person name="Gaillardin C."/>
            <person name="Weissenbach J."/>
            <person name="Wincker P."/>
            <person name="Souciet J.-L."/>
        </authorList>
    </citation>
    <scope>NUCLEOTIDE SEQUENCE [LARGE SCALE GENOMIC DNA]</scope>
    <source>
        <strain>ATCC 2001 / BCRC 20586 / JCM 3761 / NBRC 0622 / NRRL Y-65 / CBS 138</strain>
    </source>
</reference>
<accession>Q6FJ00</accession>
<proteinExistence type="inferred from homology"/>
<feature type="chain" id="PRO_0000324848" description="Transcription factor BYE1">
    <location>
        <begin position="1"/>
        <end position="607"/>
    </location>
</feature>
<feature type="domain" description="TFIIS central" evidence="3">
    <location>
        <begin position="239"/>
        <end position="374"/>
    </location>
</feature>
<feature type="zinc finger region" description="PHD-type" evidence="2">
    <location>
        <begin position="44"/>
        <end position="122"/>
    </location>
</feature>
<feature type="region of interest" description="Disordered" evidence="4">
    <location>
        <begin position="180"/>
        <end position="210"/>
    </location>
</feature>
<feature type="region of interest" description="Disordered" evidence="4">
    <location>
        <begin position="369"/>
        <end position="440"/>
    </location>
</feature>
<feature type="compositionally biased region" description="Basic and acidic residues" evidence="4">
    <location>
        <begin position="374"/>
        <end position="387"/>
    </location>
</feature>
<feature type="compositionally biased region" description="Low complexity" evidence="4">
    <location>
        <begin position="388"/>
        <end position="399"/>
    </location>
</feature>
<feature type="compositionally biased region" description="Polar residues" evidence="4">
    <location>
        <begin position="407"/>
        <end position="424"/>
    </location>
</feature>